<gene>
    <name evidence="1" type="primary">serS</name>
    <name type="ordered locus">MK1460</name>
</gene>
<keyword id="KW-0002">3D-structure</keyword>
<keyword id="KW-0030">Aminoacyl-tRNA synthetase</keyword>
<keyword id="KW-0067">ATP-binding</keyword>
<keyword id="KW-0963">Cytoplasm</keyword>
<keyword id="KW-0436">Ligase</keyword>
<keyword id="KW-0479">Metal-binding</keyword>
<keyword id="KW-0547">Nucleotide-binding</keyword>
<keyword id="KW-0648">Protein biosynthesis</keyword>
<keyword id="KW-1185">Reference proteome</keyword>
<keyword id="KW-0862">Zinc</keyword>
<protein>
    <recommendedName>
        <fullName evidence="1">Type-2 serine--tRNA ligase</fullName>
        <ecNumber evidence="1">6.1.1.11</ecNumber>
    </recommendedName>
    <alternativeName>
        <fullName evidence="1">Seryl-tRNA synthetase</fullName>
        <shortName evidence="1">SerRS</shortName>
    </alternativeName>
    <alternativeName>
        <fullName evidence="1">Seryl-tRNA(Ser/Sec) synthetase</fullName>
    </alternativeName>
</protein>
<organism>
    <name type="scientific">Methanopyrus kandleri (strain AV19 / DSM 6324 / JCM 9639 / NBRC 100938)</name>
    <dbReference type="NCBI Taxonomy" id="190192"/>
    <lineage>
        <taxon>Archaea</taxon>
        <taxon>Methanobacteriati</taxon>
        <taxon>Methanobacteriota</taxon>
        <taxon>Methanomada group</taxon>
        <taxon>Methanopyri</taxon>
        <taxon>Methanopyrales</taxon>
        <taxon>Methanopyraceae</taxon>
        <taxon>Methanopyrus</taxon>
    </lineage>
</organism>
<reference key="1">
    <citation type="journal article" date="2002" name="Proc. Natl. Acad. Sci. U.S.A.">
        <title>The complete genome of hyperthermophile Methanopyrus kandleri AV19 and monophyly of archaeal methanogens.</title>
        <authorList>
            <person name="Slesarev A.I."/>
            <person name="Mezhevaya K.V."/>
            <person name="Makarova K.S."/>
            <person name="Polushin N.N."/>
            <person name="Shcherbinina O.V."/>
            <person name="Shakhova V.V."/>
            <person name="Belova G.I."/>
            <person name="Aravind L."/>
            <person name="Natale D.A."/>
            <person name="Rogozin I.B."/>
            <person name="Tatusov R.L."/>
            <person name="Wolf Y.I."/>
            <person name="Stetter K.O."/>
            <person name="Malykh A.G."/>
            <person name="Koonin E.V."/>
            <person name="Kozyavkin S.A."/>
        </authorList>
    </citation>
    <scope>NUCLEOTIDE SEQUENCE [LARGE SCALE GENOMIC DNA]</scope>
    <source>
        <strain>AV19 / DSM 6324 / JCM 9639 / NBRC 100938</strain>
    </source>
</reference>
<evidence type="ECO:0000255" key="1">
    <source>
        <dbReference type="HAMAP-Rule" id="MF_01278"/>
    </source>
</evidence>
<evidence type="ECO:0007829" key="2">
    <source>
        <dbReference type="PDB" id="3W3S"/>
    </source>
</evidence>
<accession>Q8TVD2</accession>
<feature type="chain" id="PRO_0000286169" description="Type-2 serine--tRNA ligase">
    <location>
        <begin position="1"/>
        <end position="527"/>
    </location>
</feature>
<feature type="binding site" evidence="1">
    <location>
        <position position="317"/>
    </location>
    <ligand>
        <name>L-serine</name>
        <dbReference type="ChEBI" id="CHEBI:33384"/>
    </ligand>
</feature>
<feature type="binding site" evidence="1">
    <location>
        <position position="319"/>
    </location>
    <ligand>
        <name>Zn(2+)</name>
        <dbReference type="ChEBI" id="CHEBI:29105"/>
        <note>catalytic</note>
    </ligand>
</feature>
<feature type="binding site" evidence="1">
    <location>
        <begin position="349"/>
        <end position="351"/>
    </location>
    <ligand>
        <name>ATP</name>
        <dbReference type="ChEBI" id="CHEBI:30616"/>
    </ligand>
</feature>
<feature type="binding site" evidence="1">
    <location>
        <position position="349"/>
    </location>
    <ligand>
        <name>L-serine</name>
        <dbReference type="ChEBI" id="CHEBI:33384"/>
    </ligand>
</feature>
<feature type="binding site" evidence="1">
    <location>
        <begin position="360"/>
        <end position="361"/>
    </location>
    <ligand>
        <name>ATP</name>
        <dbReference type="ChEBI" id="CHEBI:30616"/>
    </ligand>
</feature>
<feature type="binding site" evidence="1">
    <location>
        <begin position="366"/>
        <end position="368"/>
    </location>
    <ligand>
        <name>L-serine</name>
        <dbReference type="ChEBI" id="CHEBI:33384"/>
    </ligand>
</feature>
<feature type="binding site" evidence="1">
    <location>
        <position position="368"/>
    </location>
    <ligand>
        <name>Zn(2+)</name>
        <dbReference type="ChEBI" id="CHEBI:29105"/>
        <note>catalytic</note>
    </ligand>
</feature>
<feature type="binding site" evidence="1">
    <location>
        <position position="478"/>
    </location>
    <ligand>
        <name>Zn(2+)</name>
        <dbReference type="ChEBI" id="CHEBI:29105"/>
        <note>catalytic</note>
    </ligand>
</feature>
<feature type="binding site" evidence="1">
    <location>
        <position position="485"/>
    </location>
    <ligand>
        <name>ATP</name>
        <dbReference type="ChEBI" id="CHEBI:30616"/>
    </ligand>
</feature>
<feature type="strand" evidence="2">
    <location>
        <begin position="2"/>
        <end position="15"/>
    </location>
</feature>
<feature type="helix" evidence="2">
    <location>
        <begin position="19"/>
        <end position="35"/>
    </location>
</feature>
<feature type="helix" evidence="2">
    <location>
        <begin position="37"/>
        <end position="39"/>
    </location>
</feature>
<feature type="strand" evidence="2">
    <location>
        <begin position="50"/>
        <end position="56"/>
    </location>
</feature>
<feature type="strand" evidence="2">
    <location>
        <begin position="58"/>
        <end position="71"/>
    </location>
</feature>
<feature type="helix" evidence="2">
    <location>
        <begin position="73"/>
        <end position="92"/>
    </location>
</feature>
<feature type="strand" evidence="2">
    <location>
        <begin position="96"/>
        <end position="109"/>
    </location>
</feature>
<feature type="helix" evidence="2">
    <location>
        <begin position="116"/>
        <end position="119"/>
    </location>
</feature>
<feature type="strand" evidence="2">
    <location>
        <begin position="126"/>
        <end position="130"/>
    </location>
</feature>
<feature type="strand" evidence="2">
    <location>
        <begin position="132"/>
        <end position="141"/>
    </location>
</feature>
<feature type="helix" evidence="2">
    <location>
        <begin position="144"/>
        <end position="148"/>
    </location>
</feature>
<feature type="helix" evidence="2">
    <location>
        <begin position="151"/>
        <end position="163"/>
    </location>
</feature>
<feature type="turn" evidence="2">
    <location>
        <begin position="164"/>
        <end position="167"/>
    </location>
</feature>
<feature type="helix" evidence="2">
    <location>
        <begin position="169"/>
        <end position="171"/>
    </location>
</feature>
<feature type="strand" evidence="2">
    <location>
        <begin position="181"/>
        <end position="184"/>
    </location>
</feature>
<feature type="helix" evidence="2">
    <location>
        <begin position="196"/>
        <end position="202"/>
    </location>
</feature>
<feature type="strand" evidence="2">
    <location>
        <begin position="205"/>
        <end position="208"/>
    </location>
</feature>
<feature type="strand" evidence="2">
    <location>
        <begin position="215"/>
        <end position="217"/>
    </location>
</feature>
<feature type="helix" evidence="2">
    <location>
        <begin position="219"/>
        <end position="235"/>
    </location>
</feature>
<feature type="turn" evidence="2">
    <location>
        <begin position="236"/>
        <end position="241"/>
    </location>
</feature>
<feature type="strand" evidence="2">
    <location>
        <begin position="249"/>
        <end position="252"/>
    </location>
</feature>
<feature type="helix" evidence="2">
    <location>
        <begin position="253"/>
        <end position="258"/>
    </location>
</feature>
<feature type="helix" evidence="2">
    <location>
        <begin position="261"/>
        <end position="264"/>
    </location>
</feature>
<feature type="helix" evidence="2">
    <location>
        <begin position="266"/>
        <end position="268"/>
    </location>
</feature>
<feature type="helix" evidence="2">
    <location>
        <begin position="279"/>
        <end position="292"/>
    </location>
</feature>
<feature type="helix" evidence="2">
    <location>
        <begin position="297"/>
        <end position="305"/>
    </location>
</feature>
<feature type="strand" evidence="2">
    <location>
        <begin position="312"/>
        <end position="314"/>
    </location>
</feature>
<feature type="strand" evidence="2">
    <location>
        <begin position="316"/>
        <end position="318"/>
    </location>
</feature>
<feature type="helix" evidence="2">
    <location>
        <begin position="321"/>
        <end position="326"/>
    </location>
</feature>
<feature type="turn" evidence="2">
    <location>
        <begin position="333"/>
        <end position="335"/>
    </location>
</feature>
<feature type="strand" evidence="2">
    <location>
        <begin position="338"/>
        <end position="342"/>
    </location>
</feature>
<feature type="strand" evidence="2">
    <location>
        <begin position="345"/>
        <end position="348"/>
    </location>
</feature>
<feature type="strand" evidence="2">
    <location>
        <begin position="358"/>
        <end position="360"/>
    </location>
</feature>
<feature type="strand" evidence="2">
    <location>
        <begin position="362"/>
        <end position="373"/>
    </location>
</feature>
<feature type="helix" evidence="2">
    <location>
        <begin position="375"/>
        <end position="395"/>
    </location>
</feature>
<feature type="strand" evidence="2">
    <location>
        <begin position="400"/>
        <end position="404"/>
    </location>
</feature>
<feature type="strand" evidence="2">
    <location>
        <begin position="412"/>
        <end position="414"/>
    </location>
</feature>
<feature type="helix" evidence="2">
    <location>
        <begin position="415"/>
        <end position="418"/>
    </location>
</feature>
<feature type="strand" evidence="2">
    <location>
        <begin position="428"/>
        <end position="434"/>
    </location>
</feature>
<feature type="helix" evidence="2">
    <location>
        <begin position="436"/>
        <end position="438"/>
    </location>
</feature>
<feature type="helix" evidence="2">
    <location>
        <begin position="444"/>
        <end position="446"/>
    </location>
</feature>
<feature type="strand" evidence="2">
    <location>
        <begin position="447"/>
        <end position="457"/>
    </location>
</feature>
<feature type="helix" evidence="2">
    <location>
        <begin position="459"/>
        <end position="463"/>
    </location>
</feature>
<feature type="strand" evidence="2">
    <location>
        <begin position="467"/>
        <end position="470"/>
    </location>
</feature>
<feature type="strand" evidence="2">
    <location>
        <begin position="475"/>
        <end position="482"/>
    </location>
</feature>
<feature type="helix" evidence="2">
    <location>
        <begin position="483"/>
        <end position="494"/>
    </location>
</feature>
<feature type="helix" evidence="2">
    <location>
        <begin position="498"/>
        <end position="500"/>
    </location>
</feature>
<feature type="helix" evidence="2">
    <location>
        <begin position="503"/>
        <end position="513"/>
    </location>
</feature>
<feature type="strand" evidence="2">
    <location>
        <begin position="523"/>
        <end position="525"/>
    </location>
</feature>
<dbReference type="EC" id="6.1.1.11" evidence="1"/>
<dbReference type="EMBL" id="AE009439">
    <property type="protein sequence ID" value="AAM02673.1"/>
    <property type="molecule type" value="Genomic_DNA"/>
</dbReference>
<dbReference type="RefSeq" id="WP_011019828.1">
    <property type="nucleotide sequence ID" value="NC_003551.1"/>
</dbReference>
<dbReference type="PDB" id="3W3S">
    <property type="method" value="X-ray"/>
    <property type="resolution" value="3.10 A"/>
    <property type="chains" value="A=1-527"/>
</dbReference>
<dbReference type="PDBsum" id="3W3S"/>
<dbReference type="SMR" id="Q8TVD2"/>
<dbReference type="FunCoup" id="Q8TVD2">
    <property type="interactions" value="27"/>
</dbReference>
<dbReference type="STRING" id="190192.MK1460"/>
<dbReference type="PaxDb" id="190192-MK1460"/>
<dbReference type="EnsemblBacteria" id="AAM02673">
    <property type="protein sequence ID" value="AAM02673"/>
    <property type="gene ID" value="MK1460"/>
</dbReference>
<dbReference type="GeneID" id="1478055"/>
<dbReference type="KEGG" id="mka:MK1460"/>
<dbReference type="PATRIC" id="fig|190192.8.peg.1616"/>
<dbReference type="HOGENOM" id="CLU_542524_0_0_2"/>
<dbReference type="InParanoid" id="Q8TVD2"/>
<dbReference type="OrthoDB" id="115981at2157"/>
<dbReference type="BRENDA" id="6.1.1.11">
    <property type="organism ID" value="3274"/>
</dbReference>
<dbReference type="UniPathway" id="UPA00906">
    <property type="reaction ID" value="UER00895"/>
</dbReference>
<dbReference type="EvolutionaryTrace" id="Q8TVD2"/>
<dbReference type="Proteomes" id="UP000001826">
    <property type="component" value="Chromosome"/>
</dbReference>
<dbReference type="GO" id="GO:0005737">
    <property type="term" value="C:cytoplasm"/>
    <property type="evidence" value="ECO:0007669"/>
    <property type="project" value="UniProtKB-SubCell"/>
</dbReference>
<dbReference type="GO" id="GO:0005524">
    <property type="term" value="F:ATP binding"/>
    <property type="evidence" value="ECO:0007669"/>
    <property type="project" value="UniProtKB-UniRule"/>
</dbReference>
<dbReference type="GO" id="GO:0004828">
    <property type="term" value="F:serine-tRNA ligase activity"/>
    <property type="evidence" value="ECO:0007669"/>
    <property type="project" value="UniProtKB-UniRule"/>
</dbReference>
<dbReference type="GO" id="GO:0008270">
    <property type="term" value="F:zinc ion binding"/>
    <property type="evidence" value="ECO:0007669"/>
    <property type="project" value="UniProtKB-UniRule"/>
</dbReference>
<dbReference type="GO" id="GO:0016260">
    <property type="term" value="P:selenocysteine biosynthetic process"/>
    <property type="evidence" value="ECO:0007669"/>
    <property type="project" value="UniProtKB-UniRule"/>
</dbReference>
<dbReference type="GO" id="GO:0006434">
    <property type="term" value="P:seryl-tRNA aminoacylation"/>
    <property type="evidence" value="ECO:0007669"/>
    <property type="project" value="UniProtKB-UniRule"/>
</dbReference>
<dbReference type="CDD" id="cd00670">
    <property type="entry name" value="Gly_His_Pro_Ser_Thr_tRS_core"/>
    <property type="match status" value="1"/>
</dbReference>
<dbReference type="Gene3D" id="3.30.70.1920">
    <property type="match status" value="1"/>
</dbReference>
<dbReference type="Gene3D" id="3.30.930.10">
    <property type="entry name" value="Bira Bifunctional Protein, Domain 2"/>
    <property type="match status" value="1"/>
</dbReference>
<dbReference type="HAMAP" id="MF_01278">
    <property type="entry name" value="Ser_tRNA_synth_type2"/>
    <property type="match status" value="1"/>
</dbReference>
<dbReference type="InterPro" id="IPR002314">
    <property type="entry name" value="aa-tRNA-synt_IIb"/>
</dbReference>
<dbReference type="InterPro" id="IPR006195">
    <property type="entry name" value="aa-tRNA-synth_II"/>
</dbReference>
<dbReference type="InterPro" id="IPR045864">
    <property type="entry name" value="aa-tRNA-synth_II/BPL/LPL"/>
</dbReference>
<dbReference type="InterPro" id="IPR004503">
    <property type="entry name" value="Ser-tRNA-ligase_2_arc"/>
</dbReference>
<dbReference type="InterPro" id="IPR041293">
    <property type="entry name" value="SerS_tRNA-bd"/>
</dbReference>
<dbReference type="NCBIfam" id="NF002120">
    <property type="entry name" value="PRK00960.1"/>
    <property type="match status" value="1"/>
</dbReference>
<dbReference type="NCBIfam" id="TIGR00415">
    <property type="entry name" value="serS_MJ"/>
    <property type="match status" value="1"/>
</dbReference>
<dbReference type="PANTHER" id="PTHR43697:SF1">
    <property type="entry name" value="SERINE--TRNA LIGASE"/>
    <property type="match status" value="1"/>
</dbReference>
<dbReference type="PANTHER" id="PTHR43697">
    <property type="entry name" value="SERYL-TRNA SYNTHETASE"/>
    <property type="match status" value="1"/>
</dbReference>
<dbReference type="Pfam" id="PF00587">
    <property type="entry name" value="tRNA-synt_2b"/>
    <property type="match status" value="1"/>
</dbReference>
<dbReference type="Pfam" id="PF18490">
    <property type="entry name" value="tRNA_bind_4"/>
    <property type="match status" value="1"/>
</dbReference>
<dbReference type="SUPFAM" id="SSF55681">
    <property type="entry name" value="Class II aaRS and biotin synthetases"/>
    <property type="match status" value="1"/>
</dbReference>
<dbReference type="PROSITE" id="PS50862">
    <property type="entry name" value="AA_TRNA_LIGASE_II"/>
    <property type="match status" value="1"/>
</dbReference>
<proteinExistence type="evidence at protein level"/>
<sequence>MELKFSAEVELTLSREVDPAEIEPTVEEFVKEANEDLLQRGVPTGKEGAKIESYRVLEDTIEMEITGTRYLRPHEAAMRVRKRLAERLGRKHRVGVRDLKIPRYEVVLRFDREVTRDDVGYVPVADDVVVEDGTVRLTFQDVDEEMLRRHVIDRVIRLVAWAVEERSELVERVTKVEPGTVVDESGPREIRFDGDVTEEARRRGWVKEFPGRGQWIYTPPMAALFEVLRDFLLERVTRKLGFEPALFPKLIPLETMFRMRYLHGLPDGMYYVCPPKRDPELFDDFKRELYVWGELNERTLGSLKEKLRDPGYVLAPAQCEPFYELLRDEVVDPERLPIKLYDCSGWTYRWEGGAAKGLERVNEFQRIEHVWIAEPEEAERIREELLEATKRVAEELELEWKVVVSDDPFYLEGRLLEDRDIELPDVPSYEFEVYLPFKGERSSEEAWISVGSFNVHGEHFVDGFNVKEKSGRTLFTGCAGLGVTRWVVGLLAQHGFEPEEWPEPILERIDEKFGGLPEVPKTLTWPE</sequence>
<name>SYS2_METKA</name>
<comment type="function">
    <text evidence="1">Catalyzes the attachment of serine to tRNA(Ser). Is also able to aminoacylate tRNA(Sec) with serine, to form the misacylated tRNA L-seryl-tRNA(Sec), which will be further converted into selenocysteinyl-tRNA(Sec).</text>
</comment>
<comment type="catalytic activity">
    <reaction evidence="1">
        <text>tRNA(Ser) + L-serine + ATP = L-seryl-tRNA(Ser) + AMP + diphosphate + H(+)</text>
        <dbReference type="Rhea" id="RHEA:12292"/>
        <dbReference type="Rhea" id="RHEA-COMP:9669"/>
        <dbReference type="Rhea" id="RHEA-COMP:9703"/>
        <dbReference type="ChEBI" id="CHEBI:15378"/>
        <dbReference type="ChEBI" id="CHEBI:30616"/>
        <dbReference type="ChEBI" id="CHEBI:33019"/>
        <dbReference type="ChEBI" id="CHEBI:33384"/>
        <dbReference type="ChEBI" id="CHEBI:78442"/>
        <dbReference type="ChEBI" id="CHEBI:78533"/>
        <dbReference type="ChEBI" id="CHEBI:456215"/>
        <dbReference type="EC" id="6.1.1.11"/>
    </reaction>
</comment>
<comment type="catalytic activity">
    <reaction evidence="1">
        <text>tRNA(Sec) + L-serine + ATP = L-seryl-tRNA(Sec) + AMP + diphosphate + H(+)</text>
        <dbReference type="Rhea" id="RHEA:42580"/>
        <dbReference type="Rhea" id="RHEA-COMP:9742"/>
        <dbReference type="Rhea" id="RHEA-COMP:10128"/>
        <dbReference type="ChEBI" id="CHEBI:15378"/>
        <dbReference type="ChEBI" id="CHEBI:30616"/>
        <dbReference type="ChEBI" id="CHEBI:33019"/>
        <dbReference type="ChEBI" id="CHEBI:33384"/>
        <dbReference type="ChEBI" id="CHEBI:78442"/>
        <dbReference type="ChEBI" id="CHEBI:78533"/>
        <dbReference type="ChEBI" id="CHEBI:456215"/>
        <dbReference type="EC" id="6.1.1.11"/>
    </reaction>
</comment>
<comment type="cofactor">
    <cofactor evidence="1">
        <name>Zn(2+)</name>
        <dbReference type="ChEBI" id="CHEBI:29105"/>
    </cofactor>
    <text evidence="1">Binds 1 Zn(2+) ion per subunit. This ion is coordinated with 2 cysteines, 1 glutamate and a water molecule that dissociates from the zinc ion to allow the coordination of the amino group of the serine substrate, which is essential for catalysis.</text>
</comment>
<comment type="pathway">
    <text evidence="1">Aminoacyl-tRNA biosynthesis; selenocysteinyl-tRNA(Sec) biosynthesis; L-seryl-tRNA(Sec) from L-serine and tRNA(Sec): step 1/1.</text>
</comment>
<comment type="subunit">
    <text evidence="1">Homodimer.</text>
</comment>
<comment type="subcellular location">
    <subcellularLocation>
        <location evidence="1">Cytoplasm</location>
    </subcellularLocation>
</comment>
<comment type="domain">
    <text evidence="1">Consists of two distinct domains, a catalytic core and a N-terminal extension that is presumably involved in tRNA binding.</text>
</comment>
<comment type="similarity">
    <text evidence="1">Belongs to the class-II aminoacyl-tRNA synthetase family. Type-2 seryl-tRNA synthetase subfamily.</text>
</comment>